<gene>
    <name evidence="1" type="primary">glsA</name>
    <name type="ordered locus">SPAB_01779</name>
</gene>
<dbReference type="EC" id="3.5.1.2" evidence="1"/>
<dbReference type="EMBL" id="CP000886">
    <property type="protein sequence ID" value="ABX67172.1"/>
    <property type="molecule type" value="Genomic_DNA"/>
</dbReference>
<dbReference type="SMR" id="A9MYZ4"/>
<dbReference type="KEGG" id="spq:SPAB_01779"/>
<dbReference type="PATRIC" id="fig|1016998.12.peg.1675"/>
<dbReference type="HOGENOM" id="CLU_027932_1_1_6"/>
<dbReference type="BioCyc" id="SENT1016998:SPAB_RS07210-MONOMER"/>
<dbReference type="Proteomes" id="UP000008556">
    <property type="component" value="Chromosome"/>
</dbReference>
<dbReference type="GO" id="GO:0004359">
    <property type="term" value="F:glutaminase activity"/>
    <property type="evidence" value="ECO:0007669"/>
    <property type="project" value="UniProtKB-UniRule"/>
</dbReference>
<dbReference type="GO" id="GO:0006537">
    <property type="term" value="P:glutamate biosynthetic process"/>
    <property type="evidence" value="ECO:0007669"/>
    <property type="project" value="TreeGrafter"/>
</dbReference>
<dbReference type="GO" id="GO:0006543">
    <property type="term" value="P:glutamine catabolic process"/>
    <property type="evidence" value="ECO:0007669"/>
    <property type="project" value="TreeGrafter"/>
</dbReference>
<dbReference type="FunFam" id="3.40.710.10:FF:000005">
    <property type="entry name" value="Glutaminase"/>
    <property type="match status" value="1"/>
</dbReference>
<dbReference type="Gene3D" id="3.40.710.10">
    <property type="entry name" value="DD-peptidase/beta-lactamase superfamily"/>
    <property type="match status" value="1"/>
</dbReference>
<dbReference type="HAMAP" id="MF_00313">
    <property type="entry name" value="Glutaminase"/>
    <property type="match status" value="1"/>
</dbReference>
<dbReference type="InterPro" id="IPR012338">
    <property type="entry name" value="Beta-lactam/transpept-like"/>
</dbReference>
<dbReference type="InterPro" id="IPR015868">
    <property type="entry name" value="Glutaminase"/>
</dbReference>
<dbReference type="NCBIfam" id="TIGR03814">
    <property type="entry name" value="Gln_ase"/>
    <property type="match status" value="1"/>
</dbReference>
<dbReference type="NCBIfam" id="NF002132">
    <property type="entry name" value="PRK00971.1-1"/>
    <property type="match status" value="1"/>
</dbReference>
<dbReference type="NCBIfam" id="NF002133">
    <property type="entry name" value="PRK00971.1-2"/>
    <property type="match status" value="1"/>
</dbReference>
<dbReference type="PANTHER" id="PTHR12544">
    <property type="entry name" value="GLUTAMINASE"/>
    <property type="match status" value="1"/>
</dbReference>
<dbReference type="PANTHER" id="PTHR12544:SF29">
    <property type="entry name" value="GLUTAMINASE"/>
    <property type="match status" value="1"/>
</dbReference>
<dbReference type="Pfam" id="PF04960">
    <property type="entry name" value="Glutaminase"/>
    <property type="match status" value="1"/>
</dbReference>
<dbReference type="SUPFAM" id="SSF56601">
    <property type="entry name" value="beta-lactamase/transpeptidase-like"/>
    <property type="match status" value="1"/>
</dbReference>
<keyword id="KW-0378">Hydrolase</keyword>
<sequence>MARAMDNAILETILQRVRPLIGQGKVADYIPALASVEGSKLGIAICTVDGQHYQAGDAHERFSIQSISKVLSLVVAMRHYPEEEIWQRVGKDPSGSPFNSLVQLEMEQGIPRNPFINAGALVVCDMLQGRLSAPRQRMLEVVRALCGVSDITYDATVARSEFEHSARNAAIAWLMKSFGNFHHDVPTVLQNYFHYCALKMSCMELARTFVFLANQGEAFHLDEPVVTPMQARQINALMATSGMYQNAGEFAWRVGLPAKSGVGGGIVAIVPHEMAIAVWSPELDPAGNSLAGIAALEQLTQTLGRSVY</sequence>
<reference key="1">
    <citation type="submission" date="2007-11" db="EMBL/GenBank/DDBJ databases">
        <authorList>
            <consortium name="The Salmonella enterica serovar Paratyphi B Genome Sequencing Project"/>
            <person name="McClelland M."/>
            <person name="Sanderson E.K."/>
            <person name="Porwollik S."/>
            <person name="Spieth J."/>
            <person name="Clifton W.S."/>
            <person name="Fulton R."/>
            <person name="Cordes M."/>
            <person name="Wollam A."/>
            <person name="Shah N."/>
            <person name="Pepin K."/>
            <person name="Bhonagiri V."/>
            <person name="Nash W."/>
            <person name="Johnson M."/>
            <person name="Thiruvilangam P."/>
            <person name="Wilson R."/>
        </authorList>
    </citation>
    <scope>NUCLEOTIDE SEQUENCE [LARGE SCALE GENOMIC DNA]</scope>
    <source>
        <strain>ATCC BAA-1250 / SPB7</strain>
    </source>
</reference>
<accession>A9MYZ4</accession>
<proteinExistence type="inferred from homology"/>
<organism>
    <name type="scientific">Salmonella paratyphi B (strain ATCC BAA-1250 / SPB7)</name>
    <dbReference type="NCBI Taxonomy" id="1016998"/>
    <lineage>
        <taxon>Bacteria</taxon>
        <taxon>Pseudomonadati</taxon>
        <taxon>Pseudomonadota</taxon>
        <taxon>Gammaproteobacteria</taxon>
        <taxon>Enterobacterales</taxon>
        <taxon>Enterobacteriaceae</taxon>
        <taxon>Salmonella</taxon>
    </lineage>
</organism>
<feature type="chain" id="PRO_1000079078" description="Glutaminase">
    <location>
        <begin position="1"/>
        <end position="308"/>
    </location>
</feature>
<feature type="binding site" evidence="1">
    <location>
        <position position="66"/>
    </location>
    <ligand>
        <name>substrate</name>
    </ligand>
</feature>
<feature type="binding site" evidence="1">
    <location>
        <position position="117"/>
    </location>
    <ligand>
        <name>substrate</name>
    </ligand>
</feature>
<feature type="binding site" evidence="1">
    <location>
        <position position="161"/>
    </location>
    <ligand>
        <name>substrate</name>
    </ligand>
</feature>
<feature type="binding site" evidence="1">
    <location>
        <position position="168"/>
    </location>
    <ligand>
        <name>substrate</name>
    </ligand>
</feature>
<feature type="binding site" evidence="1">
    <location>
        <position position="192"/>
    </location>
    <ligand>
        <name>substrate</name>
    </ligand>
</feature>
<feature type="binding site" evidence="1">
    <location>
        <position position="244"/>
    </location>
    <ligand>
        <name>substrate</name>
    </ligand>
</feature>
<feature type="binding site" evidence="1">
    <location>
        <position position="262"/>
    </location>
    <ligand>
        <name>substrate</name>
    </ligand>
</feature>
<evidence type="ECO:0000255" key="1">
    <source>
        <dbReference type="HAMAP-Rule" id="MF_00313"/>
    </source>
</evidence>
<protein>
    <recommendedName>
        <fullName evidence="1">Glutaminase</fullName>
        <ecNumber evidence="1">3.5.1.2</ecNumber>
    </recommendedName>
</protein>
<comment type="catalytic activity">
    <reaction evidence="1">
        <text>L-glutamine + H2O = L-glutamate + NH4(+)</text>
        <dbReference type="Rhea" id="RHEA:15889"/>
        <dbReference type="ChEBI" id="CHEBI:15377"/>
        <dbReference type="ChEBI" id="CHEBI:28938"/>
        <dbReference type="ChEBI" id="CHEBI:29985"/>
        <dbReference type="ChEBI" id="CHEBI:58359"/>
        <dbReference type="EC" id="3.5.1.2"/>
    </reaction>
</comment>
<comment type="subunit">
    <text evidence="1">Homotetramer.</text>
</comment>
<comment type="similarity">
    <text evidence="1">Belongs to the glutaminase family.</text>
</comment>
<name>GLSA_SALPB</name>